<comment type="function">
    <text evidence="1">Catalyzes the NADPH-dependent reduction of L-glutamate 5-phosphate into L-glutamate 5-semialdehyde and phosphate. The product spontaneously undergoes cyclization to form 1-pyrroline-5-carboxylate.</text>
</comment>
<comment type="catalytic activity">
    <reaction evidence="1">
        <text>L-glutamate 5-semialdehyde + phosphate + NADP(+) = L-glutamyl 5-phosphate + NADPH + H(+)</text>
        <dbReference type="Rhea" id="RHEA:19541"/>
        <dbReference type="ChEBI" id="CHEBI:15378"/>
        <dbReference type="ChEBI" id="CHEBI:43474"/>
        <dbReference type="ChEBI" id="CHEBI:57783"/>
        <dbReference type="ChEBI" id="CHEBI:58066"/>
        <dbReference type="ChEBI" id="CHEBI:58274"/>
        <dbReference type="ChEBI" id="CHEBI:58349"/>
        <dbReference type="EC" id="1.2.1.41"/>
    </reaction>
</comment>
<comment type="pathway">
    <text evidence="1">Amino-acid biosynthesis; L-proline biosynthesis; L-glutamate 5-semialdehyde from L-glutamate: step 2/2.</text>
</comment>
<comment type="subcellular location">
    <subcellularLocation>
        <location evidence="1">Cytoplasm</location>
    </subcellularLocation>
</comment>
<comment type="similarity">
    <text evidence="1">Belongs to the gamma-glutamyl phosphate reductase family.</text>
</comment>
<name>PROA_ZYMMO</name>
<feature type="chain" id="PRO_0000189820" description="Gamma-glutamyl phosphate reductase">
    <location>
        <begin position="1"/>
        <end position="428"/>
    </location>
</feature>
<gene>
    <name evidence="1" type="primary">proA</name>
    <name type="ordered locus">ZMO1661</name>
</gene>
<protein>
    <recommendedName>
        <fullName evidence="1">Gamma-glutamyl phosphate reductase</fullName>
        <shortName evidence="1">GPR</shortName>
        <ecNumber evidence="1">1.2.1.41</ecNumber>
    </recommendedName>
    <alternativeName>
        <fullName evidence="1">Glutamate-5-semialdehyde dehydrogenase</fullName>
    </alternativeName>
    <alternativeName>
        <fullName evidence="1">Glutamyl-gamma-semialdehyde dehydrogenase</fullName>
        <shortName evidence="1">GSA dehydrogenase</shortName>
    </alternativeName>
</protein>
<reference key="1">
    <citation type="journal article" date="2005" name="Nat. Biotechnol.">
        <title>The genome sequence of the ethanologenic bacterium Zymomonas mobilis ZM4.</title>
        <authorList>
            <person name="Seo J.-S."/>
            <person name="Chong H."/>
            <person name="Park H.S."/>
            <person name="Yoon K.-O."/>
            <person name="Jung C."/>
            <person name="Kim J.J."/>
            <person name="Hong J.H."/>
            <person name="Kim H."/>
            <person name="Kim J.-H."/>
            <person name="Kil J.-I."/>
            <person name="Park C.J."/>
            <person name="Oh H.-M."/>
            <person name="Lee J.-S."/>
            <person name="Jin S.-J."/>
            <person name="Um H.-W."/>
            <person name="Lee H.-J."/>
            <person name="Oh S.-J."/>
            <person name="Kim J.Y."/>
            <person name="Kang H.L."/>
            <person name="Lee S.Y."/>
            <person name="Lee K.J."/>
            <person name="Kang H.S."/>
        </authorList>
    </citation>
    <scope>NUCLEOTIDE SEQUENCE [LARGE SCALE GENOMIC DNA]</scope>
    <source>
        <strain>ATCC 31821 / ZM4 / CP4</strain>
    </source>
</reference>
<proteinExistence type="inferred from homology"/>
<keyword id="KW-0028">Amino-acid biosynthesis</keyword>
<keyword id="KW-0963">Cytoplasm</keyword>
<keyword id="KW-0521">NADP</keyword>
<keyword id="KW-0560">Oxidoreductase</keyword>
<keyword id="KW-0641">Proline biosynthesis</keyword>
<keyword id="KW-1185">Reference proteome</keyword>
<sequence>MTGNKIDQATPTEMMAGMAKKARLASQILAQAPTAQKAEALVLTADAIRRHSADILAANAQDVATAENNQSSSAMVDRLRLTEARLENMASALEVIAHLEDPVGQIIDKRTRPNGLELTRIRVPIGVIGIIYESRPNVTIDAAALTLMSGNAAILRGGSEAIHSNKALYQTMREGLAKAGLPEEAIQLVPTTDRALVGAMLTASGLIDLVIPRGGKSLVARVQQDARVPVLAHLDGINHSYVHKEADPEKVEKVVVNAKMRRTGICGATESLLIDRGYPVEKVKSLLQALHNAGCEIRGTAEIQKIDPEAKAVSEEDWGTEYLDAVLSVRFVDDMDDALSHIARYSSGHTDAILTENREVAEKFLASVDSAIVMWNASTQFADGGEFGLGAEIGIATGRIHARGPVALEGLTSYKWQVRGTGQIRPVA</sequence>
<organism>
    <name type="scientific">Zymomonas mobilis subsp. mobilis (strain ATCC 31821 / ZM4 / CP4)</name>
    <dbReference type="NCBI Taxonomy" id="264203"/>
    <lineage>
        <taxon>Bacteria</taxon>
        <taxon>Pseudomonadati</taxon>
        <taxon>Pseudomonadota</taxon>
        <taxon>Alphaproteobacteria</taxon>
        <taxon>Sphingomonadales</taxon>
        <taxon>Zymomonadaceae</taxon>
        <taxon>Zymomonas</taxon>
    </lineage>
</organism>
<evidence type="ECO:0000255" key="1">
    <source>
        <dbReference type="HAMAP-Rule" id="MF_00412"/>
    </source>
</evidence>
<dbReference type="EC" id="1.2.1.41" evidence="1"/>
<dbReference type="EMBL" id="AE008692">
    <property type="protein sequence ID" value="AAV90285.1"/>
    <property type="molecule type" value="Genomic_DNA"/>
</dbReference>
<dbReference type="RefSeq" id="WP_011241410.1">
    <property type="nucleotide sequence ID" value="NZ_CP035711.1"/>
</dbReference>
<dbReference type="SMR" id="Q5NLX5"/>
<dbReference type="STRING" id="264203.ZMO1661"/>
<dbReference type="KEGG" id="zmo:ZMO1661"/>
<dbReference type="eggNOG" id="COG0014">
    <property type="taxonomic scope" value="Bacteria"/>
</dbReference>
<dbReference type="HOGENOM" id="CLU_030231_0_0_5"/>
<dbReference type="UniPathway" id="UPA00098">
    <property type="reaction ID" value="UER00360"/>
</dbReference>
<dbReference type="Proteomes" id="UP000001173">
    <property type="component" value="Chromosome"/>
</dbReference>
<dbReference type="GO" id="GO:0005737">
    <property type="term" value="C:cytoplasm"/>
    <property type="evidence" value="ECO:0007669"/>
    <property type="project" value="UniProtKB-SubCell"/>
</dbReference>
<dbReference type="GO" id="GO:0004350">
    <property type="term" value="F:glutamate-5-semialdehyde dehydrogenase activity"/>
    <property type="evidence" value="ECO:0007669"/>
    <property type="project" value="UniProtKB-UniRule"/>
</dbReference>
<dbReference type="GO" id="GO:0050661">
    <property type="term" value="F:NADP binding"/>
    <property type="evidence" value="ECO:0007669"/>
    <property type="project" value="InterPro"/>
</dbReference>
<dbReference type="GO" id="GO:0055129">
    <property type="term" value="P:L-proline biosynthetic process"/>
    <property type="evidence" value="ECO:0007669"/>
    <property type="project" value="UniProtKB-UniRule"/>
</dbReference>
<dbReference type="CDD" id="cd07079">
    <property type="entry name" value="ALDH_F18-19_ProA-GPR"/>
    <property type="match status" value="1"/>
</dbReference>
<dbReference type="Gene3D" id="3.40.605.10">
    <property type="entry name" value="Aldehyde Dehydrogenase, Chain A, domain 1"/>
    <property type="match status" value="1"/>
</dbReference>
<dbReference type="Gene3D" id="3.40.309.10">
    <property type="entry name" value="Aldehyde Dehydrogenase, Chain A, domain 2"/>
    <property type="match status" value="1"/>
</dbReference>
<dbReference type="HAMAP" id="MF_00412">
    <property type="entry name" value="ProA"/>
    <property type="match status" value="1"/>
</dbReference>
<dbReference type="InterPro" id="IPR016161">
    <property type="entry name" value="Ald_DH/histidinol_DH"/>
</dbReference>
<dbReference type="InterPro" id="IPR016163">
    <property type="entry name" value="Ald_DH_C"/>
</dbReference>
<dbReference type="InterPro" id="IPR016162">
    <property type="entry name" value="Ald_DH_N"/>
</dbReference>
<dbReference type="InterPro" id="IPR015590">
    <property type="entry name" value="Aldehyde_DH_dom"/>
</dbReference>
<dbReference type="InterPro" id="IPR020593">
    <property type="entry name" value="G-glutamylP_reductase_CS"/>
</dbReference>
<dbReference type="InterPro" id="IPR012134">
    <property type="entry name" value="Glu-5-SA_DH"/>
</dbReference>
<dbReference type="InterPro" id="IPR000965">
    <property type="entry name" value="GPR_dom"/>
</dbReference>
<dbReference type="NCBIfam" id="NF001221">
    <property type="entry name" value="PRK00197.1"/>
    <property type="match status" value="1"/>
</dbReference>
<dbReference type="NCBIfam" id="TIGR00407">
    <property type="entry name" value="proA"/>
    <property type="match status" value="1"/>
</dbReference>
<dbReference type="PANTHER" id="PTHR11063:SF8">
    <property type="entry name" value="DELTA-1-PYRROLINE-5-CARBOXYLATE SYNTHASE"/>
    <property type="match status" value="1"/>
</dbReference>
<dbReference type="PANTHER" id="PTHR11063">
    <property type="entry name" value="GLUTAMATE SEMIALDEHYDE DEHYDROGENASE"/>
    <property type="match status" value="1"/>
</dbReference>
<dbReference type="Pfam" id="PF00171">
    <property type="entry name" value="Aldedh"/>
    <property type="match status" value="1"/>
</dbReference>
<dbReference type="PIRSF" id="PIRSF000151">
    <property type="entry name" value="GPR"/>
    <property type="match status" value="1"/>
</dbReference>
<dbReference type="SUPFAM" id="SSF53720">
    <property type="entry name" value="ALDH-like"/>
    <property type="match status" value="1"/>
</dbReference>
<dbReference type="PROSITE" id="PS01223">
    <property type="entry name" value="PROA"/>
    <property type="match status" value="1"/>
</dbReference>
<accession>Q5NLX5</accession>